<keyword id="KW-0030">Aminoacyl-tRNA synthetase</keyword>
<keyword id="KW-0067">ATP-binding</keyword>
<keyword id="KW-0963">Cytoplasm</keyword>
<keyword id="KW-0436">Ligase</keyword>
<keyword id="KW-0479">Metal-binding</keyword>
<keyword id="KW-0547">Nucleotide-binding</keyword>
<keyword id="KW-0648">Protein biosynthesis</keyword>
<keyword id="KW-1185">Reference proteome</keyword>
<keyword id="KW-0862">Zinc</keyword>
<accession>A8ERE6</accession>
<evidence type="ECO:0000255" key="1">
    <source>
        <dbReference type="HAMAP-Rule" id="MF_00041"/>
    </source>
</evidence>
<protein>
    <recommendedName>
        <fullName evidence="1">Cysteine--tRNA ligase</fullName>
        <ecNumber evidence="1">6.1.1.16</ecNumber>
    </recommendedName>
    <alternativeName>
        <fullName evidence="1">Cysteinyl-tRNA synthetase</fullName>
        <shortName evidence="1">CysRS</shortName>
    </alternativeName>
</protein>
<gene>
    <name evidence="1" type="primary">cysS</name>
    <name type="ordered locus">Abu_0245</name>
</gene>
<feature type="chain" id="PRO_0000332786" description="Cysteine--tRNA ligase">
    <location>
        <begin position="1"/>
        <end position="467"/>
    </location>
</feature>
<feature type="short sequence motif" description="'HIGH' region">
    <location>
        <begin position="32"/>
        <end position="42"/>
    </location>
</feature>
<feature type="short sequence motif" description="'KMSKS' region">
    <location>
        <begin position="271"/>
        <end position="275"/>
    </location>
</feature>
<feature type="binding site" evidence="1">
    <location>
        <position position="30"/>
    </location>
    <ligand>
        <name>Zn(2+)</name>
        <dbReference type="ChEBI" id="CHEBI:29105"/>
    </ligand>
</feature>
<feature type="binding site" evidence="1">
    <location>
        <position position="209"/>
    </location>
    <ligand>
        <name>Zn(2+)</name>
        <dbReference type="ChEBI" id="CHEBI:29105"/>
    </ligand>
</feature>
<feature type="binding site" evidence="1">
    <location>
        <position position="239"/>
    </location>
    <ligand>
        <name>Zn(2+)</name>
        <dbReference type="ChEBI" id="CHEBI:29105"/>
    </ligand>
</feature>
<feature type="binding site" evidence="1">
    <location>
        <position position="243"/>
    </location>
    <ligand>
        <name>Zn(2+)</name>
        <dbReference type="ChEBI" id="CHEBI:29105"/>
    </ligand>
</feature>
<feature type="binding site" evidence="1">
    <location>
        <position position="274"/>
    </location>
    <ligand>
        <name>ATP</name>
        <dbReference type="ChEBI" id="CHEBI:30616"/>
    </ligand>
</feature>
<dbReference type="EC" id="6.1.1.16" evidence="1"/>
<dbReference type="EMBL" id="CP000361">
    <property type="protein sequence ID" value="ABV66520.1"/>
    <property type="molecule type" value="Genomic_DNA"/>
</dbReference>
<dbReference type="RefSeq" id="WP_012012109.1">
    <property type="nucleotide sequence ID" value="NC_009850.1"/>
</dbReference>
<dbReference type="SMR" id="A8ERE6"/>
<dbReference type="STRING" id="367737.Abu_0245"/>
<dbReference type="GeneID" id="24303937"/>
<dbReference type="KEGG" id="abu:Abu_0245"/>
<dbReference type="eggNOG" id="COG0215">
    <property type="taxonomic scope" value="Bacteria"/>
</dbReference>
<dbReference type="HOGENOM" id="CLU_013528_0_1_7"/>
<dbReference type="Proteomes" id="UP000001136">
    <property type="component" value="Chromosome"/>
</dbReference>
<dbReference type="GO" id="GO:0005829">
    <property type="term" value="C:cytosol"/>
    <property type="evidence" value="ECO:0007669"/>
    <property type="project" value="TreeGrafter"/>
</dbReference>
<dbReference type="GO" id="GO:0005524">
    <property type="term" value="F:ATP binding"/>
    <property type="evidence" value="ECO:0007669"/>
    <property type="project" value="UniProtKB-UniRule"/>
</dbReference>
<dbReference type="GO" id="GO:0004817">
    <property type="term" value="F:cysteine-tRNA ligase activity"/>
    <property type="evidence" value="ECO:0007669"/>
    <property type="project" value="UniProtKB-UniRule"/>
</dbReference>
<dbReference type="GO" id="GO:0008270">
    <property type="term" value="F:zinc ion binding"/>
    <property type="evidence" value="ECO:0007669"/>
    <property type="project" value="UniProtKB-UniRule"/>
</dbReference>
<dbReference type="GO" id="GO:0006423">
    <property type="term" value="P:cysteinyl-tRNA aminoacylation"/>
    <property type="evidence" value="ECO:0007669"/>
    <property type="project" value="UniProtKB-UniRule"/>
</dbReference>
<dbReference type="CDD" id="cd00672">
    <property type="entry name" value="CysRS_core"/>
    <property type="match status" value="1"/>
</dbReference>
<dbReference type="Gene3D" id="1.20.120.1910">
    <property type="entry name" value="Cysteine-tRNA ligase, C-terminal anti-codon recognition domain"/>
    <property type="match status" value="1"/>
</dbReference>
<dbReference type="Gene3D" id="3.40.50.620">
    <property type="entry name" value="HUPs"/>
    <property type="match status" value="1"/>
</dbReference>
<dbReference type="HAMAP" id="MF_00041">
    <property type="entry name" value="Cys_tRNA_synth"/>
    <property type="match status" value="1"/>
</dbReference>
<dbReference type="InterPro" id="IPR015803">
    <property type="entry name" value="Cys-tRNA-ligase"/>
</dbReference>
<dbReference type="InterPro" id="IPR015273">
    <property type="entry name" value="Cys-tRNA-synt_Ia_DALR"/>
</dbReference>
<dbReference type="InterPro" id="IPR024909">
    <property type="entry name" value="Cys-tRNA/MSH_ligase"/>
</dbReference>
<dbReference type="InterPro" id="IPR014729">
    <property type="entry name" value="Rossmann-like_a/b/a_fold"/>
</dbReference>
<dbReference type="InterPro" id="IPR032678">
    <property type="entry name" value="tRNA-synt_1_cat_dom"/>
</dbReference>
<dbReference type="InterPro" id="IPR009080">
    <property type="entry name" value="tRNAsynth_Ia_anticodon-bd"/>
</dbReference>
<dbReference type="NCBIfam" id="TIGR00435">
    <property type="entry name" value="cysS"/>
    <property type="match status" value="1"/>
</dbReference>
<dbReference type="PANTHER" id="PTHR10890:SF3">
    <property type="entry name" value="CYSTEINE--TRNA LIGASE, CYTOPLASMIC"/>
    <property type="match status" value="1"/>
</dbReference>
<dbReference type="PANTHER" id="PTHR10890">
    <property type="entry name" value="CYSTEINYL-TRNA SYNTHETASE"/>
    <property type="match status" value="1"/>
</dbReference>
<dbReference type="Pfam" id="PF09190">
    <property type="entry name" value="DALR_2"/>
    <property type="match status" value="1"/>
</dbReference>
<dbReference type="Pfam" id="PF01406">
    <property type="entry name" value="tRNA-synt_1e"/>
    <property type="match status" value="1"/>
</dbReference>
<dbReference type="PRINTS" id="PR00983">
    <property type="entry name" value="TRNASYNTHCYS"/>
</dbReference>
<dbReference type="SMART" id="SM00840">
    <property type="entry name" value="DALR_2"/>
    <property type="match status" value="1"/>
</dbReference>
<dbReference type="SUPFAM" id="SSF47323">
    <property type="entry name" value="Anticodon-binding domain of a subclass of class I aminoacyl-tRNA synthetases"/>
    <property type="match status" value="1"/>
</dbReference>
<dbReference type="SUPFAM" id="SSF52374">
    <property type="entry name" value="Nucleotidylyl transferase"/>
    <property type="match status" value="1"/>
</dbReference>
<reference key="1">
    <citation type="journal article" date="2007" name="PLoS ONE">
        <title>The complete genome sequence and analysis of the Epsilonproteobacterium Arcobacter butzleri.</title>
        <authorList>
            <person name="Miller W.G."/>
            <person name="Parker C.T."/>
            <person name="Rubenfield M."/>
            <person name="Mendz G.L."/>
            <person name="Woesten M.M.S.M."/>
            <person name="Ussery D.W."/>
            <person name="Stolz J.F."/>
            <person name="Binnewies T.T."/>
            <person name="Hallin P.F."/>
            <person name="Wang G."/>
            <person name="Malek J.A."/>
            <person name="Rogosin A."/>
            <person name="Stanker L.H."/>
            <person name="Mandrell R.E."/>
        </authorList>
    </citation>
    <scope>NUCLEOTIDE SEQUENCE [LARGE SCALE GENOMIC DNA]</scope>
    <source>
        <strain>RM4018</strain>
    </source>
</reference>
<comment type="catalytic activity">
    <reaction evidence="1">
        <text>tRNA(Cys) + L-cysteine + ATP = L-cysteinyl-tRNA(Cys) + AMP + diphosphate</text>
        <dbReference type="Rhea" id="RHEA:17773"/>
        <dbReference type="Rhea" id="RHEA-COMP:9661"/>
        <dbReference type="Rhea" id="RHEA-COMP:9679"/>
        <dbReference type="ChEBI" id="CHEBI:30616"/>
        <dbReference type="ChEBI" id="CHEBI:33019"/>
        <dbReference type="ChEBI" id="CHEBI:35235"/>
        <dbReference type="ChEBI" id="CHEBI:78442"/>
        <dbReference type="ChEBI" id="CHEBI:78517"/>
        <dbReference type="ChEBI" id="CHEBI:456215"/>
        <dbReference type="EC" id="6.1.1.16"/>
    </reaction>
</comment>
<comment type="cofactor">
    <cofactor evidence="1">
        <name>Zn(2+)</name>
        <dbReference type="ChEBI" id="CHEBI:29105"/>
    </cofactor>
    <text evidence="1">Binds 1 zinc ion per subunit.</text>
</comment>
<comment type="subunit">
    <text evidence="1">Monomer.</text>
</comment>
<comment type="subcellular location">
    <subcellularLocation>
        <location evidence="1">Cytoplasm</location>
    </subcellularLocation>
</comment>
<comment type="similarity">
    <text evidence="1">Belongs to the class-I aminoacyl-tRNA synthetase family.</text>
</comment>
<organism>
    <name type="scientific">Aliarcobacter butzleri (strain RM4018)</name>
    <name type="common">Arcobacter butzleri</name>
    <dbReference type="NCBI Taxonomy" id="367737"/>
    <lineage>
        <taxon>Bacteria</taxon>
        <taxon>Pseudomonadati</taxon>
        <taxon>Campylobacterota</taxon>
        <taxon>Epsilonproteobacteria</taxon>
        <taxon>Campylobacterales</taxon>
        <taxon>Arcobacteraceae</taxon>
        <taxon>Aliarcobacter</taxon>
    </lineage>
</organism>
<name>SYC_ALIB4</name>
<proteinExistence type="inferred from homology"/>
<sequence length="467" mass="53425">MNTLHIFDSVKKEKVEFKPIQEGKVKIYVCGPTVYDDSHLGHARSAIAFDLLHRVLKVNDYEVTMTKNFTDIDDKIIKKMYETNKTLENITNQYINAYKADMKALNILDNTIEPKATENLEVMKEMISNLISKDVAYKTSDSVYFDTSKDNLYGTLSHKSNDENSQARVEENQEKRNSADFALWKFEKANDVSFDAPFGKGRPGWHIECSAMIEKHLAYKDSPYQIDIHAGGADLLFPHHENEAAQTRCSSGQNLAKYWMHNGFVNINGEKMSKSLGNSFFLKDVLKSYSGEVIRFYLMSTHYRADLSFNEEDLIASKKRLDKIYRLKKRVYGIEDSSVNKKFKEDILNALNDDINTSIALSVIDEMINSANDKLDSNPKDKNLKKELISNINFIEEVLGIGGNDAYAYFQFGINESTKEKIESLILKRNEAKKTKDFQTADKLRDELSSMDISLMDTVNGTVWEKL</sequence>